<organism>
    <name type="scientific">Arabidopsis thaliana</name>
    <name type="common">Mouse-ear cress</name>
    <dbReference type="NCBI Taxonomy" id="3702"/>
    <lineage>
        <taxon>Eukaryota</taxon>
        <taxon>Viridiplantae</taxon>
        <taxon>Streptophyta</taxon>
        <taxon>Embryophyta</taxon>
        <taxon>Tracheophyta</taxon>
        <taxon>Spermatophyta</taxon>
        <taxon>Magnoliopsida</taxon>
        <taxon>eudicotyledons</taxon>
        <taxon>Gunneridae</taxon>
        <taxon>Pentapetalae</taxon>
        <taxon>rosids</taxon>
        <taxon>malvids</taxon>
        <taxon>Brassicales</taxon>
        <taxon>Brassicaceae</taxon>
        <taxon>Camelineae</taxon>
        <taxon>Arabidopsis</taxon>
    </lineage>
</organism>
<reference key="1">
    <citation type="journal article" date="1999" name="Nature">
        <title>Sequence and analysis of chromosome 4 of the plant Arabidopsis thaliana.</title>
        <authorList>
            <person name="Mayer K.F.X."/>
            <person name="Schueller C."/>
            <person name="Wambutt R."/>
            <person name="Murphy G."/>
            <person name="Volckaert G."/>
            <person name="Pohl T."/>
            <person name="Duesterhoeft A."/>
            <person name="Stiekema W."/>
            <person name="Entian K.-D."/>
            <person name="Terryn N."/>
            <person name="Harris B."/>
            <person name="Ansorge W."/>
            <person name="Brandt P."/>
            <person name="Grivell L.A."/>
            <person name="Rieger M."/>
            <person name="Weichselgartner M."/>
            <person name="de Simone V."/>
            <person name="Obermaier B."/>
            <person name="Mache R."/>
            <person name="Mueller M."/>
            <person name="Kreis M."/>
            <person name="Delseny M."/>
            <person name="Puigdomenech P."/>
            <person name="Watson M."/>
            <person name="Schmidtheini T."/>
            <person name="Reichert B."/>
            <person name="Portetelle D."/>
            <person name="Perez-Alonso M."/>
            <person name="Boutry M."/>
            <person name="Bancroft I."/>
            <person name="Vos P."/>
            <person name="Hoheisel J."/>
            <person name="Zimmermann W."/>
            <person name="Wedler H."/>
            <person name="Ridley P."/>
            <person name="Langham S.-A."/>
            <person name="McCullagh B."/>
            <person name="Bilham L."/>
            <person name="Robben J."/>
            <person name="van der Schueren J."/>
            <person name="Grymonprez B."/>
            <person name="Chuang Y.-J."/>
            <person name="Vandenbussche F."/>
            <person name="Braeken M."/>
            <person name="Weltjens I."/>
            <person name="Voet M."/>
            <person name="Bastiaens I."/>
            <person name="Aert R."/>
            <person name="Defoor E."/>
            <person name="Weitzenegger T."/>
            <person name="Bothe G."/>
            <person name="Ramsperger U."/>
            <person name="Hilbert H."/>
            <person name="Braun M."/>
            <person name="Holzer E."/>
            <person name="Brandt A."/>
            <person name="Peters S."/>
            <person name="van Staveren M."/>
            <person name="Dirkse W."/>
            <person name="Mooijman P."/>
            <person name="Klein Lankhorst R."/>
            <person name="Rose M."/>
            <person name="Hauf J."/>
            <person name="Koetter P."/>
            <person name="Berneiser S."/>
            <person name="Hempel S."/>
            <person name="Feldpausch M."/>
            <person name="Lamberth S."/>
            <person name="Van den Daele H."/>
            <person name="De Keyser A."/>
            <person name="Buysshaert C."/>
            <person name="Gielen J."/>
            <person name="Villarroel R."/>
            <person name="De Clercq R."/>
            <person name="van Montagu M."/>
            <person name="Rogers J."/>
            <person name="Cronin A."/>
            <person name="Quail M.A."/>
            <person name="Bray-Allen S."/>
            <person name="Clark L."/>
            <person name="Doggett J."/>
            <person name="Hall S."/>
            <person name="Kay M."/>
            <person name="Lennard N."/>
            <person name="McLay K."/>
            <person name="Mayes R."/>
            <person name="Pettett A."/>
            <person name="Rajandream M.A."/>
            <person name="Lyne M."/>
            <person name="Benes V."/>
            <person name="Rechmann S."/>
            <person name="Borkova D."/>
            <person name="Bloecker H."/>
            <person name="Scharfe M."/>
            <person name="Grimm M."/>
            <person name="Loehnert T.-H."/>
            <person name="Dose S."/>
            <person name="de Haan M."/>
            <person name="Maarse A.C."/>
            <person name="Schaefer M."/>
            <person name="Mueller-Auer S."/>
            <person name="Gabel C."/>
            <person name="Fuchs M."/>
            <person name="Fartmann B."/>
            <person name="Granderath K."/>
            <person name="Dauner D."/>
            <person name="Herzl A."/>
            <person name="Neumann S."/>
            <person name="Argiriou A."/>
            <person name="Vitale D."/>
            <person name="Liguori R."/>
            <person name="Piravandi E."/>
            <person name="Massenet O."/>
            <person name="Quigley F."/>
            <person name="Clabauld G."/>
            <person name="Muendlein A."/>
            <person name="Felber R."/>
            <person name="Schnabl S."/>
            <person name="Hiller R."/>
            <person name="Schmidt W."/>
            <person name="Lecharny A."/>
            <person name="Aubourg S."/>
            <person name="Chefdor F."/>
            <person name="Cooke R."/>
            <person name="Berger C."/>
            <person name="Monfort A."/>
            <person name="Casacuberta E."/>
            <person name="Gibbons T."/>
            <person name="Weber N."/>
            <person name="Vandenbol M."/>
            <person name="Bargues M."/>
            <person name="Terol J."/>
            <person name="Torres A."/>
            <person name="Perez-Perez A."/>
            <person name="Purnelle B."/>
            <person name="Bent E."/>
            <person name="Johnson S."/>
            <person name="Tacon D."/>
            <person name="Jesse T."/>
            <person name="Heijnen L."/>
            <person name="Schwarz S."/>
            <person name="Scholler P."/>
            <person name="Heber S."/>
            <person name="Francs P."/>
            <person name="Bielke C."/>
            <person name="Frishman D."/>
            <person name="Haase D."/>
            <person name="Lemcke K."/>
            <person name="Mewes H.-W."/>
            <person name="Stocker S."/>
            <person name="Zaccaria P."/>
            <person name="Bevan M."/>
            <person name="Wilson R.K."/>
            <person name="de la Bastide M."/>
            <person name="Habermann K."/>
            <person name="Parnell L."/>
            <person name="Dedhia N."/>
            <person name="Gnoj L."/>
            <person name="Schutz K."/>
            <person name="Huang E."/>
            <person name="Spiegel L."/>
            <person name="Sekhon M."/>
            <person name="Murray J."/>
            <person name="Sheet P."/>
            <person name="Cordes M."/>
            <person name="Abu-Threideh J."/>
            <person name="Stoneking T."/>
            <person name="Kalicki J."/>
            <person name="Graves T."/>
            <person name="Harmon G."/>
            <person name="Edwards J."/>
            <person name="Latreille P."/>
            <person name="Courtney L."/>
            <person name="Cloud J."/>
            <person name="Abbott A."/>
            <person name="Scott K."/>
            <person name="Johnson D."/>
            <person name="Minx P."/>
            <person name="Bentley D."/>
            <person name="Fulton B."/>
            <person name="Miller N."/>
            <person name="Greco T."/>
            <person name="Kemp K."/>
            <person name="Kramer J."/>
            <person name="Fulton L."/>
            <person name="Mardis E."/>
            <person name="Dante M."/>
            <person name="Pepin K."/>
            <person name="Hillier L.W."/>
            <person name="Nelson J."/>
            <person name="Spieth J."/>
            <person name="Ryan E."/>
            <person name="Andrews S."/>
            <person name="Geisel C."/>
            <person name="Layman D."/>
            <person name="Du H."/>
            <person name="Ali J."/>
            <person name="Berghoff A."/>
            <person name="Jones K."/>
            <person name="Drone K."/>
            <person name="Cotton M."/>
            <person name="Joshu C."/>
            <person name="Antonoiu B."/>
            <person name="Zidanic M."/>
            <person name="Strong C."/>
            <person name="Sun H."/>
            <person name="Lamar B."/>
            <person name="Yordan C."/>
            <person name="Ma P."/>
            <person name="Zhong J."/>
            <person name="Preston R."/>
            <person name="Vil D."/>
            <person name="Shekher M."/>
            <person name="Matero A."/>
            <person name="Shah R."/>
            <person name="Swaby I.K."/>
            <person name="O'Shaughnessy A."/>
            <person name="Rodriguez M."/>
            <person name="Hoffman J."/>
            <person name="Till S."/>
            <person name="Granat S."/>
            <person name="Shohdy N."/>
            <person name="Hasegawa A."/>
            <person name="Hameed A."/>
            <person name="Lodhi M."/>
            <person name="Johnson A."/>
            <person name="Chen E."/>
            <person name="Marra M.A."/>
            <person name="Martienssen R."/>
            <person name="McCombie W.R."/>
        </authorList>
    </citation>
    <scope>NUCLEOTIDE SEQUENCE [LARGE SCALE GENOMIC DNA]</scope>
    <source>
        <strain>cv. Columbia</strain>
    </source>
</reference>
<reference key="2">
    <citation type="journal article" date="2017" name="Plant J.">
        <title>Araport11: a complete reannotation of the Arabidopsis thaliana reference genome.</title>
        <authorList>
            <person name="Cheng C.Y."/>
            <person name="Krishnakumar V."/>
            <person name="Chan A.P."/>
            <person name="Thibaud-Nissen F."/>
            <person name="Schobel S."/>
            <person name="Town C.D."/>
        </authorList>
    </citation>
    <scope>GENOME REANNOTATION</scope>
    <source>
        <strain>cv. Columbia</strain>
    </source>
</reference>
<reference key="3">
    <citation type="journal article" date="2006" name="Proc. Natl. Acad. Sci. U.S.A.">
        <title>AtALMT1, which encodes a malate transporter, is identified as one of several genes critical for aluminum tolerance in Arabidopsis.</title>
        <authorList>
            <person name="Hoekenga O.A."/>
            <person name="Maron L.G."/>
            <person name="Pineros M.A."/>
            <person name="Cancado G.M."/>
            <person name="Shaff J."/>
            <person name="Kobayashi Y."/>
            <person name="Ryan P.R."/>
            <person name="Dong B."/>
            <person name="Delhaize E."/>
            <person name="Sasaki T."/>
            <person name="Matsumoto H."/>
            <person name="Yamamoto Y."/>
            <person name="Koyama H."/>
            <person name="Kochian L.V."/>
        </authorList>
    </citation>
    <scope>GENE FAMILY</scope>
    <scope>NOMENCLATURE</scope>
</reference>
<reference key="4">
    <citation type="journal article" date="2010" name="Plant Cell Physiol.">
        <title>Closing plant stomata requires a homolog of an aluminum-activated malate transporter.</title>
        <authorList>
            <person name="Sasaki T."/>
            <person name="Mori I.C."/>
            <person name="Furuichi T."/>
            <person name="Munemasa S."/>
            <person name="Toyooka K."/>
            <person name="Matsuoka K."/>
            <person name="Murata Y."/>
            <person name="Yamamoto Y."/>
        </authorList>
    </citation>
    <scope>FUNCTION</scope>
    <scope>TISSUE SPECIFICITY</scope>
    <scope>SUBCELLULAR LOCATION</scope>
    <scope>ALTERNATIVE SPLICING</scope>
    <scope>INDUCTION BY ALUMINUM</scope>
    <scope>DISRUPTION PHENOTYPE</scope>
</reference>
<reference key="5">
    <citation type="journal article" date="2010" name="Plant J.">
        <title>AtALMT12 represents an R-type anion channel required for stomatal movement in Arabidopsis guard cells.</title>
        <authorList>
            <person name="Meyer S."/>
            <person name="Mumm P."/>
            <person name="Imes D."/>
            <person name="Endler A."/>
            <person name="Weder B."/>
            <person name="Al-Rasheid K.A."/>
            <person name="Geiger D."/>
            <person name="Marten I."/>
            <person name="Martinoia E."/>
            <person name="Hedrich R."/>
        </authorList>
    </citation>
    <scope>FUNCTION</scope>
    <scope>SUBCELLULAR LOCATION</scope>
    <scope>TISSUE SPECIFICITY</scope>
    <scope>INDUCTION BY ALUMINUM</scope>
</reference>
<keyword id="KW-0025">Alternative splicing</keyword>
<keyword id="KW-1003">Cell membrane</keyword>
<keyword id="KW-0868">Chloride</keyword>
<keyword id="KW-0407">Ion channel</keyword>
<keyword id="KW-0406">Ion transport</keyword>
<keyword id="KW-0472">Membrane</keyword>
<keyword id="KW-1185">Reference proteome</keyword>
<keyword id="KW-0764">Sulfate transport</keyword>
<keyword id="KW-0812">Transmembrane</keyword>
<keyword id="KW-1133">Transmembrane helix</keyword>
<keyword id="KW-0813">Transport</keyword>
<evidence type="ECO:0000255" key="1"/>
<evidence type="ECO:0000256" key="2">
    <source>
        <dbReference type="SAM" id="MobiDB-lite"/>
    </source>
</evidence>
<evidence type="ECO:0000269" key="3">
    <source>
    </source>
</evidence>
<evidence type="ECO:0000269" key="4">
    <source>
    </source>
</evidence>
<evidence type="ECO:0000305" key="5"/>
<sequence>MSNKVHVGSLEMEEGLSKTKWMVLEPSEKIKKIPKRLWNVGKEDPRRVIHALKVGLSLTLVSLLYLMEPLFKGIGSNAIWAVMTVVVVLEFSAGATLCKGLNRGLGTLIAGSLAFFIEFVANDSGKVLRAIFIGTAVFIIGAAATYIRFIPYIKKNYDYGVVIFLLTFNLITVSSYRVDSVINIAHDRFYTIAVGCGICLFMSLLVFPIWSGEDLHKTTVGKLQGLSRSIEACVDEYFEEKEKEKTDSKDRIYEGYQAVLDSKSTDETLALYANWEPRHTLRCHRFPCQQYVKVGAVLRQFGYTVVALHGCLQTEIQTPRSVRALFKDPCVRLAGEVCKALTELADSISNHRHCSPEILSDHLHVALQDLNSAIKSQPKLFLGSNLHRHNNKHQNGSISNNKHHQRNSSNSGKDLNGDVSLQNTETGTRKITETGSRQGQNGAVSLSSFRTDTSALMEYRRSFKNSNSEMSAAGERRMLRPQLSKIAVMTSLEFSEALPFAAFASLLVEMVARLDNVIEEVEELGRIASFKEYDNKRDQTADDVRCENPANVTISVGAAE</sequence>
<protein>
    <recommendedName>
        <fullName>Aluminum-activated malate transporter 12</fullName>
        <shortName>AtALMT12</shortName>
    </recommendedName>
    <alternativeName>
        <fullName>Quick anion channel 1</fullName>
    </alternativeName>
</protein>
<gene>
    <name type="primary">ALMT12</name>
    <name type="synonym">QUAC1</name>
    <name type="ordered locus">At4g17970</name>
    <name type="ORF">T6K21.150</name>
</gene>
<name>ALMTC_ARATH</name>
<accession>O49696</accession>
<feature type="chain" id="PRO_0000401471" description="Aluminum-activated malate transporter 12">
    <location>
        <begin position="1"/>
        <end position="560"/>
    </location>
</feature>
<feature type="transmembrane region" description="Helical" evidence="1">
    <location>
        <begin position="54"/>
        <end position="74"/>
    </location>
</feature>
<feature type="transmembrane region" description="Helical" evidence="1">
    <location>
        <begin position="78"/>
        <end position="98"/>
    </location>
</feature>
<feature type="transmembrane region" description="Helical" evidence="1">
    <location>
        <begin position="104"/>
        <end position="124"/>
    </location>
</feature>
<feature type="transmembrane region" description="Helical" evidence="1">
    <location>
        <begin position="130"/>
        <end position="150"/>
    </location>
</feature>
<feature type="transmembrane region" description="Helical" evidence="1">
    <location>
        <begin position="156"/>
        <end position="176"/>
    </location>
</feature>
<feature type="transmembrane region" description="Helical" evidence="1">
    <location>
        <begin position="189"/>
        <end position="209"/>
    </location>
</feature>
<feature type="region of interest" description="Disordered" evidence="2">
    <location>
        <begin position="386"/>
        <end position="421"/>
    </location>
</feature>
<feature type="compositionally biased region" description="Polar residues" evidence="2">
    <location>
        <begin position="407"/>
        <end position="421"/>
    </location>
</feature>
<feature type="splice variant" id="VSP_040183" description="In isoform 2." evidence="5">
    <original>ALYANWEP</original>
    <variation>VSLYYIFL</variation>
    <location>
        <begin position="270"/>
        <end position="277"/>
    </location>
</feature>
<feature type="splice variant" id="VSP_040184" description="In isoform 2." evidence="5">
    <location>
        <begin position="278"/>
        <end position="560"/>
    </location>
</feature>
<feature type="splice variant" id="VSP_040185" description="In isoform 3." evidence="5">
    <original>TPRSVRA</original>
    <variation>VRLLITL</variation>
    <location>
        <begin position="318"/>
        <end position="324"/>
    </location>
</feature>
<feature type="splice variant" id="VSP_040186" description="In isoform 3." evidence="5">
    <location>
        <begin position="325"/>
        <end position="560"/>
    </location>
</feature>
<proteinExistence type="evidence at transcript level"/>
<dbReference type="EMBL" id="AL021889">
    <property type="protein sequence ID" value="CAA17140.1"/>
    <property type="molecule type" value="Genomic_DNA"/>
</dbReference>
<dbReference type="EMBL" id="AL161547">
    <property type="protein sequence ID" value="CAB78799.1"/>
    <property type="molecule type" value="Genomic_DNA"/>
</dbReference>
<dbReference type="EMBL" id="CP002687">
    <property type="protein sequence ID" value="AEE83973.1"/>
    <property type="molecule type" value="Genomic_DNA"/>
</dbReference>
<dbReference type="PIR" id="T05083">
    <property type="entry name" value="T05083"/>
</dbReference>
<dbReference type="RefSeq" id="NP_193531.1">
    <molecule id="O49696-1"/>
    <property type="nucleotide sequence ID" value="NM_117907.4"/>
</dbReference>
<dbReference type="SMR" id="O49696"/>
<dbReference type="STRING" id="3702.O49696"/>
<dbReference type="TCDB" id="2.A.85.2.1">
    <property type="family name" value="the aromatic acid exporter (arae) family"/>
</dbReference>
<dbReference type="PaxDb" id="3702-AT4G17970.1"/>
<dbReference type="ProteomicsDB" id="244996">
    <molecule id="O49696-1"/>
</dbReference>
<dbReference type="EnsemblPlants" id="AT4G17970.1">
    <molecule id="O49696-1"/>
    <property type="protein sequence ID" value="AT4G17970.1"/>
    <property type="gene ID" value="AT4G17970"/>
</dbReference>
<dbReference type="GeneID" id="827522"/>
<dbReference type="Gramene" id="AT4G17970.1">
    <molecule id="O49696-1"/>
    <property type="protein sequence ID" value="AT4G17970.1"/>
    <property type="gene ID" value="AT4G17970"/>
</dbReference>
<dbReference type="KEGG" id="ath:AT4G17970"/>
<dbReference type="Araport" id="AT4G17970"/>
<dbReference type="TAIR" id="AT4G17970">
    <property type="gene designation" value="ALMT12"/>
</dbReference>
<dbReference type="eggNOG" id="KOG4711">
    <property type="taxonomic scope" value="Eukaryota"/>
</dbReference>
<dbReference type="HOGENOM" id="CLU_020841_1_2_1"/>
<dbReference type="InParanoid" id="O49696"/>
<dbReference type="OMA" id="IACFKEF"/>
<dbReference type="PhylomeDB" id="O49696"/>
<dbReference type="PRO" id="PR:O49696"/>
<dbReference type="Proteomes" id="UP000006548">
    <property type="component" value="Chromosome 4"/>
</dbReference>
<dbReference type="ExpressionAtlas" id="O49696">
    <property type="expression patterns" value="baseline and differential"/>
</dbReference>
<dbReference type="GO" id="GO:0012505">
    <property type="term" value="C:endomembrane system"/>
    <property type="evidence" value="ECO:0000314"/>
    <property type="project" value="TAIR"/>
</dbReference>
<dbReference type="GO" id="GO:0005886">
    <property type="term" value="C:plasma membrane"/>
    <property type="evidence" value="ECO:0007669"/>
    <property type="project" value="UniProtKB-SubCell"/>
</dbReference>
<dbReference type="GO" id="GO:0008509">
    <property type="term" value="F:monoatomic anion transmembrane transporter activity"/>
    <property type="evidence" value="ECO:0000314"/>
    <property type="project" value="TAIR"/>
</dbReference>
<dbReference type="GO" id="GO:0015743">
    <property type="term" value="P:malate transport"/>
    <property type="evidence" value="ECO:0007669"/>
    <property type="project" value="InterPro"/>
</dbReference>
<dbReference type="GO" id="GO:0010118">
    <property type="term" value="P:stomatal movement"/>
    <property type="evidence" value="ECO:0000315"/>
    <property type="project" value="TAIR"/>
</dbReference>
<dbReference type="InterPro" id="IPR020966">
    <property type="entry name" value="ALMT"/>
</dbReference>
<dbReference type="PANTHER" id="PTHR31086">
    <property type="entry name" value="ALUMINUM-ACTIVATED MALATE TRANSPORTER 10"/>
    <property type="match status" value="1"/>
</dbReference>
<dbReference type="Pfam" id="PF11744">
    <property type="entry name" value="ALMT"/>
    <property type="match status" value="1"/>
</dbReference>
<comment type="function">
    <text evidence="3 4">Malate-sensitive anion transporter permeable to chloride, nitrate, sulfate and malate. Involved in dark-, CO(2)-, abscisic acid- and water-deficient-induced stomatal closure. Belongs to the R-type anion channels.</text>
</comment>
<comment type="subcellular location">
    <subcellularLocation>
        <location evidence="3 4">Cell membrane</location>
        <topology evidence="3 4">Multi-pass membrane protein</topology>
    </subcellularLocation>
    <text>PubMed:20626656 also indicates a not confirmed endomembrane localization.</text>
</comment>
<comment type="alternative products">
    <event type="alternative splicing"/>
    <isoform>
        <id>O49696-1</id>
        <name>1</name>
        <sequence type="displayed"/>
    </isoform>
    <isoform>
        <id>O49696-2</id>
        <name>2</name>
        <sequence type="described" ref="VSP_040183 VSP_040184"/>
    </isoform>
    <isoform>
        <id>O49696-3</id>
        <name>3</name>
        <sequence type="described" ref="VSP_040185 VSP_040186"/>
    </isoform>
    <text>The splice variants are not functional as anion transporters.</text>
</comment>
<comment type="tissue specificity">
    <text evidence="3 4">Expressed in roots, stems, leaves, flowers and pollen. Mainly detected in the roots vascular stele and in the leaves guard cells.</text>
</comment>
<comment type="induction">
    <text evidence="3 4">Not induced by aluminum.</text>
</comment>
<comment type="disruption phenotype">
    <text evidence="3">Impaired stomatal closure resulting in a wilty phenotype.</text>
</comment>
<comment type="miscellaneous">
    <text>Malate functions as a gating modifier as well as a permeating substrate.</text>
</comment>
<comment type="similarity">
    <text evidence="5">Belongs to the aromatic acid exporter (TC 2.A.85) family.</text>
</comment>